<name>PXPA_PYRAB</name>
<keyword id="KW-0067">ATP-binding</keyword>
<keyword id="KW-0378">Hydrolase</keyword>
<keyword id="KW-0547">Nucleotide-binding</keyword>
<organism>
    <name type="scientific">Pyrococcus abyssi (strain GE5 / Orsay)</name>
    <dbReference type="NCBI Taxonomy" id="272844"/>
    <lineage>
        <taxon>Archaea</taxon>
        <taxon>Methanobacteriati</taxon>
        <taxon>Methanobacteriota</taxon>
        <taxon>Thermococci</taxon>
        <taxon>Thermococcales</taxon>
        <taxon>Thermococcaceae</taxon>
        <taxon>Pyrococcus</taxon>
    </lineage>
</organism>
<gene>
    <name evidence="1" type="primary">pxpA</name>
    <name type="ordered locus">PYRAB09930</name>
    <name type="ORF">PAB2445</name>
</gene>
<evidence type="ECO:0000255" key="1">
    <source>
        <dbReference type="HAMAP-Rule" id="MF_00691"/>
    </source>
</evidence>
<sequence>MRVDLNSDLGESFGRYKLGLDEEVMRYITSANIACGWHAGDPIVMRRTVKLAKENNVQVGAHPGYPDLMGFGRRYMKLTPEEARNYILYQIGALYAFAKAEGVELQHVKPHGALYNAMVKEEELARAVIEGILDFDKNLILVTLSNSRVAEIAEEMGLKVAHEVFADRAYNPDGTLVPRGKPGAVIEDKEEIAERVISMVKDGGVRAINGEWVELRVDTICVHGDNPKALEITSHIRKILEEEGVKVVPLKDFIG</sequence>
<proteinExistence type="inferred from homology"/>
<comment type="function">
    <text evidence="1">Catalyzes the cleavage of 5-oxoproline to form L-glutamate coupled to the hydrolysis of ATP to ADP and inorganic phosphate.</text>
</comment>
<comment type="catalytic activity">
    <reaction evidence="1">
        <text>5-oxo-L-proline + ATP + 2 H2O = L-glutamate + ADP + phosphate + H(+)</text>
        <dbReference type="Rhea" id="RHEA:10348"/>
        <dbReference type="ChEBI" id="CHEBI:15377"/>
        <dbReference type="ChEBI" id="CHEBI:15378"/>
        <dbReference type="ChEBI" id="CHEBI:29985"/>
        <dbReference type="ChEBI" id="CHEBI:30616"/>
        <dbReference type="ChEBI" id="CHEBI:43474"/>
        <dbReference type="ChEBI" id="CHEBI:58402"/>
        <dbReference type="ChEBI" id="CHEBI:456216"/>
        <dbReference type="EC" id="3.5.2.9"/>
    </reaction>
</comment>
<comment type="subunit">
    <text evidence="1">Forms a complex composed of PxpA, PxpB and PxpC.</text>
</comment>
<comment type="similarity">
    <text evidence="1">Belongs to the LamB/PxpA family.</text>
</comment>
<protein>
    <recommendedName>
        <fullName evidence="1">5-oxoprolinase subunit A</fullName>
        <shortName evidence="1">5-OPase subunit A</shortName>
        <ecNumber evidence="1">3.5.2.9</ecNumber>
    </recommendedName>
    <alternativeName>
        <fullName evidence="1">5-oxoprolinase (ATP-hydrolyzing) subunit A</fullName>
    </alternativeName>
</protein>
<feature type="chain" id="PRO_0000185064" description="5-oxoprolinase subunit A">
    <location>
        <begin position="1"/>
        <end position="255"/>
    </location>
</feature>
<reference key="1">
    <citation type="journal article" date="2003" name="Mol. Microbiol.">
        <title>An integrated analysis of the genome of the hyperthermophilic archaeon Pyrococcus abyssi.</title>
        <authorList>
            <person name="Cohen G.N."/>
            <person name="Barbe V."/>
            <person name="Flament D."/>
            <person name="Galperin M."/>
            <person name="Heilig R."/>
            <person name="Lecompte O."/>
            <person name="Poch O."/>
            <person name="Prieur D."/>
            <person name="Querellou J."/>
            <person name="Ripp R."/>
            <person name="Thierry J.-C."/>
            <person name="Van der Oost J."/>
            <person name="Weissenbach J."/>
            <person name="Zivanovic Y."/>
            <person name="Forterre P."/>
        </authorList>
    </citation>
    <scope>NUCLEOTIDE SEQUENCE [LARGE SCALE GENOMIC DNA]</scope>
    <source>
        <strain>GE5 / Orsay</strain>
    </source>
</reference>
<reference key="2">
    <citation type="journal article" date="2012" name="Curr. Microbiol.">
        <title>Re-annotation of two hyperthermophilic archaea Pyrococcus abyssi GE5 and Pyrococcus furiosus DSM 3638.</title>
        <authorList>
            <person name="Gao J."/>
            <person name="Wang J."/>
        </authorList>
    </citation>
    <scope>GENOME REANNOTATION</scope>
    <source>
        <strain>GE5 / Orsay</strain>
    </source>
</reference>
<accession>Q9V005</accession>
<accession>G8ZIF8</accession>
<dbReference type="EC" id="3.5.2.9" evidence="1"/>
<dbReference type="EMBL" id="AJ248286">
    <property type="protein sequence ID" value="CAB49901.1"/>
    <property type="molecule type" value="Genomic_DNA"/>
</dbReference>
<dbReference type="EMBL" id="HE613800">
    <property type="protein sequence ID" value="CCE70399.1"/>
    <property type="molecule type" value="Genomic_DNA"/>
</dbReference>
<dbReference type="PIR" id="H75074">
    <property type="entry name" value="H75074"/>
</dbReference>
<dbReference type="RefSeq" id="WP_010868110.1">
    <property type="nucleotide sequence ID" value="NC_000868.1"/>
</dbReference>
<dbReference type="SMR" id="Q9V005"/>
<dbReference type="STRING" id="272844.PAB2445"/>
<dbReference type="KEGG" id="pab:PAB2445"/>
<dbReference type="PATRIC" id="fig|272844.11.peg.1045"/>
<dbReference type="eggNOG" id="arCOG05810">
    <property type="taxonomic scope" value="Archaea"/>
</dbReference>
<dbReference type="HOGENOM" id="CLU_069535_0_0_2"/>
<dbReference type="OrthoDB" id="84497at2157"/>
<dbReference type="PhylomeDB" id="Q9V005"/>
<dbReference type="Proteomes" id="UP000000810">
    <property type="component" value="Chromosome"/>
</dbReference>
<dbReference type="Proteomes" id="UP000009139">
    <property type="component" value="Chromosome"/>
</dbReference>
<dbReference type="GO" id="GO:0017168">
    <property type="term" value="F:5-oxoprolinase (ATP-hydrolyzing) activity"/>
    <property type="evidence" value="ECO:0007669"/>
    <property type="project" value="UniProtKB-UniRule"/>
</dbReference>
<dbReference type="GO" id="GO:0005524">
    <property type="term" value="F:ATP binding"/>
    <property type="evidence" value="ECO:0007669"/>
    <property type="project" value="UniProtKB-UniRule"/>
</dbReference>
<dbReference type="GO" id="GO:0005975">
    <property type="term" value="P:carbohydrate metabolic process"/>
    <property type="evidence" value="ECO:0007669"/>
    <property type="project" value="InterPro"/>
</dbReference>
<dbReference type="CDD" id="cd10787">
    <property type="entry name" value="LamB_YcsF_like"/>
    <property type="match status" value="1"/>
</dbReference>
<dbReference type="Gene3D" id="3.20.20.370">
    <property type="entry name" value="Glycoside hydrolase/deacetylase"/>
    <property type="match status" value="1"/>
</dbReference>
<dbReference type="HAMAP" id="MF_00691">
    <property type="entry name" value="PxpA"/>
    <property type="match status" value="1"/>
</dbReference>
<dbReference type="InterPro" id="IPR011330">
    <property type="entry name" value="Glyco_hydro/deAcase_b/a-brl"/>
</dbReference>
<dbReference type="InterPro" id="IPR005501">
    <property type="entry name" value="LamB/YcsF/PxpA-like"/>
</dbReference>
<dbReference type="NCBIfam" id="NF003814">
    <property type="entry name" value="PRK05406.1-3"/>
    <property type="match status" value="1"/>
</dbReference>
<dbReference type="NCBIfam" id="NF003816">
    <property type="entry name" value="PRK05406.1-5"/>
    <property type="match status" value="1"/>
</dbReference>
<dbReference type="PANTHER" id="PTHR30292:SF0">
    <property type="entry name" value="5-OXOPROLINASE SUBUNIT A"/>
    <property type="match status" value="1"/>
</dbReference>
<dbReference type="PANTHER" id="PTHR30292">
    <property type="entry name" value="UNCHARACTERIZED PROTEIN YBGL-RELATED"/>
    <property type="match status" value="1"/>
</dbReference>
<dbReference type="Pfam" id="PF03746">
    <property type="entry name" value="LamB_YcsF"/>
    <property type="match status" value="1"/>
</dbReference>
<dbReference type="SUPFAM" id="SSF88713">
    <property type="entry name" value="Glycoside hydrolase/deacetylase"/>
    <property type="match status" value="1"/>
</dbReference>